<reference key="1">
    <citation type="journal article" date="1997" name="Nature">
        <title>The nucleotide sequence of Saccharomyces cerevisiae chromosome XII.</title>
        <authorList>
            <person name="Johnston M."/>
            <person name="Hillier L.W."/>
            <person name="Riles L."/>
            <person name="Albermann K."/>
            <person name="Andre B."/>
            <person name="Ansorge W."/>
            <person name="Benes V."/>
            <person name="Brueckner M."/>
            <person name="Delius H."/>
            <person name="Dubois E."/>
            <person name="Duesterhoeft A."/>
            <person name="Entian K.-D."/>
            <person name="Floeth M."/>
            <person name="Goffeau A."/>
            <person name="Hebling U."/>
            <person name="Heumann K."/>
            <person name="Heuss-Neitzel D."/>
            <person name="Hilbert H."/>
            <person name="Hilger F."/>
            <person name="Kleine K."/>
            <person name="Koetter P."/>
            <person name="Louis E.J."/>
            <person name="Messenguy F."/>
            <person name="Mewes H.-W."/>
            <person name="Miosga T."/>
            <person name="Moestl D."/>
            <person name="Mueller-Auer S."/>
            <person name="Nentwich U."/>
            <person name="Obermaier B."/>
            <person name="Piravandi E."/>
            <person name="Pohl T.M."/>
            <person name="Portetelle D."/>
            <person name="Purnelle B."/>
            <person name="Rechmann S."/>
            <person name="Rieger M."/>
            <person name="Rinke M."/>
            <person name="Rose M."/>
            <person name="Scharfe M."/>
            <person name="Scherens B."/>
            <person name="Scholler P."/>
            <person name="Schwager C."/>
            <person name="Schwarz S."/>
            <person name="Underwood A.P."/>
            <person name="Urrestarazu L.A."/>
            <person name="Vandenbol M."/>
            <person name="Verhasselt P."/>
            <person name="Vierendeels F."/>
            <person name="Voet M."/>
            <person name="Volckaert G."/>
            <person name="Voss H."/>
            <person name="Wambutt R."/>
            <person name="Wedler E."/>
            <person name="Wedler H."/>
            <person name="Zimmermann F.K."/>
            <person name="Zollner A."/>
            <person name="Hani J."/>
            <person name="Hoheisel J.D."/>
        </authorList>
    </citation>
    <scope>NUCLEOTIDE SEQUENCE [LARGE SCALE GENOMIC DNA]</scope>
    <source>
        <strain>ATCC 204508 / S288c</strain>
    </source>
</reference>
<reference key="2">
    <citation type="journal article" date="2014" name="G3 (Bethesda)">
        <title>The reference genome sequence of Saccharomyces cerevisiae: Then and now.</title>
        <authorList>
            <person name="Engel S.R."/>
            <person name="Dietrich F.S."/>
            <person name="Fisk D.G."/>
            <person name="Binkley G."/>
            <person name="Balakrishnan R."/>
            <person name="Costanzo M.C."/>
            <person name="Dwight S.S."/>
            <person name="Hitz B.C."/>
            <person name="Karra K."/>
            <person name="Nash R.S."/>
            <person name="Weng S."/>
            <person name="Wong E.D."/>
            <person name="Lloyd P."/>
            <person name="Skrzypek M.S."/>
            <person name="Miyasato S.R."/>
            <person name="Simison M."/>
            <person name="Cherry J.M."/>
        </authorList>
    </citation>
    <scope>GENOME REANNOTATION</scope>
    <source>
        <strain>ATCC 204508 / S288c</strain>
    </source>
</reference>
<reference key="3">
    <citation type="journal article" date="2002" name="J. Biol. Chem.">
        <title>Identification of a novel non-structural maintenance of chromosomes (SMC) component of the SMC5-SMC6 complex involved in DNA repair.</title>
        <authorList>
            <person name="Fujioka Y."/>
            <person name="Kimata Y."/>
            <person name="Nomaguchi K."/>
            <person name="Watanabe K."/>
            <person name="Kohno K."/>
        </authorList>
    </citation>
    <scope>FUNCTION</scope>
    <scope>INTERACTION WITH SMC5 AND SMC6</scope>
    <scope>SUBCELLULAR LOCATION</scope>
</reference>
<reference key="4">
    <citation type="journal article" date="2003" name="Mol. Cell">
        <title>Assigning function to yeast proteins by integration of technologies.</title>
        <authorList>
            <person name="Hazbun T.R."/>
            <person name="Malmstroem L."/>
            <person name="Anderson S."/>
            <person name="Graczyk B.J."/>
            <person name="Fox B."/>
            <person name="Riffle M."/>
            <person name="Sundin B.A."/>
            <person name="Aranda J.D."/>
            <person name="McDonald W.H."/>
            <person name="Chiu C.-H."/>
            <person name="Snydsman B.E."/>
            <person name="Bradley P."/>
            <person name="Muller E.G.D."/>
            <person name="Fields S."/>
            <person name="Baker D."/>
            <person name="Yates J.R. III"/>
            <person name="Davis T.N."/>
        </authorList>
    </citation>
    <scope>IDENTIFICATION BY MASS SPECTROMETRY</scope>
    <scope>INTERACTION WITH NSE3</scope>
</reference>
<reference key="5">
    <citation type="journal article" date="2005" name="Proc. Natl. Acad. Sci. U.S.A.">
        <title>A SUMO ligase is part of a nuclear multiprotein complex that affects DNA repair and chromosomal organization.</title>
        <authorList>
            <person name="Zhao X."/>
            <person name="Blobel G."/>
        </authorList>
    </citation>
    <scope>SUBUNIT</scope>
</reference>
<evidence type="ECO:0000250" key="1">
    <source>
        <dbReference type="UniProtKB" id="Q8WV22"/>
    </source>
</evidence>
<evidence type="ECO:0000255" key="2">
    <source>
        <dbReference type="PROSITE-ProRule" id="PRU00175"/>
    </source>
</evidence>
<evidence type="ECO:0000269" key="3">
    <source>
    </source>
</evidence>
<evidence type="ECO:0000269" key="4">
    <source>
    </source>
</evidence>
<evidence type="ECO:0000269" key="5">
    <source>
    </source>
</evidence>
<evidence type="ECO:0000305" key="6"/>
<evidence type="ECO:0007829" key="7">
    <source>
        <dbReference type="PDB" id="8HQS"/>
    </source>
</evidence>
<feature type="chain" id="PRO_0000114116" description="Non-structural maintenance of chromosomes element 1">
    <location>
        <begin position="1"/>
        <end position="336"/>
    </location>
</feature>
<feature type="zinc finger region" description="RING-type; atypical" evidence="2">
    <location>
        <begin position="268"/>
        <end position="327"/>
    </location>
</feature>
<feature type="helix" evidence="7">
    <location>
        <begin position="14"/>
        <end position="27"/>
    </location>
</feature>
<feature type="helix" evidence="7">
    <location>
        <begin position="34"/>
        <end position="45"/>
    </location>
</feature>
<feature type="turn" evidence="7">
    <location>
        <begin position="46"/>
        <end position="48"/>
    </location>
</feature>
<feature type="helix" evidence="7">
    <location>
        <begin position="57"/>
        <end position="78"/>
    </location>
</feature>
<feature type="strand" evidence="7">
    <location>
        <begin position="81"/>
        <end position="83"/>
    </location>
</feature>
<feature type="helix" evidence="7">
    <location>
        <begin position="91"/>
        <end position="96"/>
    </location>
</feature>
<feature type="strand" evidence="7">
    <location>
        <begin position="120"/>
        <end position="122"/>
    </location>
</feature>
<feature type="strand" evidence="7">
    <location>
        <begin position="133"/>
        <end position="136"/>
    </location>
</feature>
<feature type="helix" evidence="7">
    <location>
        <begin position="152"/>
        <end position="167"/>
    </location>
</feature>
<feature type="helix" evidence="7">
    <location>
        <begin position="183"/>
        <end position="194"/>
    </location>
</feature>
<feature type="strand" evidence="7">
    <location>
        <begin position="206"/>
        <end position="208"/>
    </location>
</feature>
<feature type="helix" evidence="7">
    <location>
        <begin position="215"/>
        <end position="218"/>
    </location>
</feature>
<feature type="strand" evidence="7">
    <location>
        <begin position="220"/>
        <end position="222"/>
    </location>
</feature>
<feature type="helix" evidence="7">
    <location>
        <begin position="224"/>
        <end position="236"/>
    </location>
</feature>
<feature type="strand" evidence="7">
    <location>
        <begin position="239"/>
        <end position="242"/>
    </location>
</feature>
<feature type="strand" evidence="7">
    <location>
        <begin position="248"/>
        <end position="250"/>
    </location>
</feature>
<feature type="helix" evidence="7">
    <location>
        <begin position="252"/>
        <end position="257"/>
    </location>
</feature>
<feature type="helix" evidence="7">
    <location>
        <begin position="261"/>
        <end position="264"/>
    </location>
</feature>
<feature type="strand" evidence="7">
    <location>
        <begin position="272"/>
        <end position="275"/>
    </location>
</feature>
<feature type="strand" evidence="7">
    <location>
        <begin position="280"/>
        <end position="282"/>
    </location>
</feature>
<feature type="strand" evidence="7">
    <location>
        <begin position="298"/>
        <end position="302"/>
    </location>
</feature>
<feature type="helix" evidence="7">
    <location>
        <begin position="307"/>
        <end position="314"/>
    </location>
</feature>
<feature type="turn" evidence="7">
    <location>
        <begin position="322"/>
        <end position="325"/>
    </location>
</feature>
<feature type="turn" evidence="7">
    <location>
        <begin position="328"/>
        <end position="330"/>
    </location>
</feature>
<feature type="strand" evidence="7">
    <location>
        <begin position="334"/>
        <end position="336"/>
    </location>
</feature>
<dbReference type="EC" id="2.3.2.27" evidence="1"/>
<dbReference type="EMBL" id="Z73179">
    <property type="protein sequence ID" value="CAA97529.1"/>
    <property type="molecule type" value="Genomic_DNA"/>
</dbReference>
<dbReference type="EMBL" id="BK006945">
    <property type="protein sequence ID" value="DAA09325.1"/>
    <property type="molecule type" value="Genomic_DNA"/>
</dbReference>
<dbReference type="PIR" id="S64829">
    <property type="entry name" value="S64829"/>
</dbReference>
<dbReference type="RefSeq" id="NP_013107.1">
    <property type="nucleotide sequence ID" value="NM_001181894.1"/>
</dbReference>
<dbReference type="PDB" id="7QCD">
    <property type="method" value="EM"/>
    <property type="resolution" value="8.00 A"/>
    <property type="chains" value="D=1-336"/>
</dbReference>
<dbReference type="PDB" id="7TVE">
    <property type="method" value="EM"/>
    <property type="resolution" value="3.80 A"/>
    <property type="chains" value="C=1-336"/>
</dbReference>
<dbReference type="PDB" id="7YMD">
    <property type="method" value="EM"/>
    <property type="resolution" value="4.18 A"/>
    <property type="chains" value="B=1-336"/>
</dbReference>
<dbReference type="PDB" id="7YQH">
    <property type="method" value="EM"/>
    <property type="resolution" value="5.60 A"/>
    <property type="chains" value="F=1-336"/>
</dbReference>
<dbReference type="PDB" id="8HQS">
    <property type="method" value="EM"/>
    <property type="resolution" value="3.20 A"/>
    <property type="chains" value="F=1-336"/>
</dbReference>
<dbReference type="PDB" id="8WJN">
    <property type="method" value="EM"/>
    <property type="resolution" value="5.58 A"/>
    <property type="chains" value="F=1-336"/>
</dbReference>
<dbReference type="PDBsum" id="7QCD"/>
<dbReference type="PDBsum" id="7TVE"/>
<dbReference type="PDBsum" id="7YMD"/>
<dbReference type="PDBsum" id="7YQH"/>
<dbReference type="PDBsum" id="8HQS"/>
<dbReference type="PDBsum" id="8WJN"/>
<dbReference type="EMDB" id="EMD-13895"/>
<dbReference type="EMDB" id="EMD-33927"/>
<dbReference type="EMDB" id="EMD-34025"/>
<dbReference type="EMDB" id="EMD-34953"/>
<dbReference type="EMDB" id="EMD-37586"/>
<dbReference type="SMR" id="Q07913"/>
<dbReference type="BioGRID" id="31280">
    <property type="interactions" value="262"/>
</dbReference>
<dbReference type="ComplexPortal" id="CPX-1364">
    <property type="entry name" value="SMC5-SMC6 SUMO ligase complex"/>
</dbReference>
<dbReference type="DIP" id="DIP-8847N"/>
<dbReference type="FunCoup" id="Q07913">
    <property type="interactions" value="163"/>
</dbReference>
<dbReference type="IntAct" id="Q07913">
    <property type="interactions" value="6"/>
</dbReference>
<dbReference type="STRING" id="4932.YLR007W"/>
<dbReference type="iPTMnet" id="Q07913"/>
<dbReference type="PaxDb" id="4932-YLR007W"/>
<dbReference type="PeptideAtlas" id="Q07913"/>
<dbReference type="EnsemblFungi" id="YLR007W_mRNA">
    <property type="protein sequence ID" value="YLR007W"/>
    <property type="gene ID" value="YLR007W"/>
</dbReference>
<dbReference type="GeneID" id="850693"/>
<dbReference type="KEGG" id="sce:YLR007W"/>
<dbReference type="AGR" id="SGD:S000003997"/>
<dbReference type="SGD" id="S000003997">
    <property type="gene designation" value="NSE1"/>
</dbReference>
<dbReference type="VEuPathDB" id="FungiDB:YLR007W"/>
<dbReference type="eggNOG" id="KOG4718">
    <property type="taxonomic scope" value="Eukaryota"/>
</dbReference>
<dbReference type="GeneTree" id="ENSGT00390000009084"/>
<dbReference type="HOGENOM" id="CLU_826927_0_0_1"/>
<dbReference type="InParanoid" id="Q07913"/>
<dbReference type="OMA" id="KIIRINH"/>
<dbReference type="OrthoDB" id="185455at2759"/>
<dbReference type="BioCyc" id="YEAST:G3O-32168-MONOMER"/>
<dbReference type="Reactome" id="R-SCE-3108214">
    <property type="pathway name" value="SUMOylation of DNA damage response and repair proteins"/>
</dbReference>
<dbReference type="BioGRID-ORCS" id="850693">
    <property type="hits" value="0 hits in 10 CRISPR screens"/>
</dbReference>
<dbReference type="PRO" id="PR:Q07913"/>
<dbReference type="Proteomes" id="UP000002311">
    <property type="component" value="Chromosome XII"/>
</dbReference>
<dbReference type="RNAct" id="Q07913">
    <property type="molecule type" value="protein"/>
</dbReference>
<dbReference type="GO" id="GO:0000781">
    <property type="term" value="C:chromosome, telomeric region"/>
    <property type="evidence" value="ECO:0000303"/>
    <property type="project" value="ComplexPortal"/>
</dbReference>
<dbReference type="GO" id="GO:0005634">
    <property type="term" value="C:nucleus"/>
    <property type="evidence" value="ECO:0000314"/>
    <property type="project" value="SGD"/>
</dbReference>
<dbReference type="GO" id="GO:0030915">
    <property type="term" value="C:Smc5-Smc6 complex"/>
    <property type="evidence" value="ECO:0000314"/>
    <property type="project" value="SGD"/>
</dbReference>
<dbReference type="GO" id="GO:0004842">
    <property type="term" value="F:ubiquitin-protein transferase activity"/>
    <property type="evidence" value="ECO:0000318"/>
    <property type="project" value="GO_Central"/>
</dbReference>
<dbReference type="GO" id="GO:0008270">
    <property type="term" value="F:zinc ion binding"/>
    <property type="evidence" value="ECO:0007669"/>
    <property type="project" value="UniProtKB-KW"/>
</dbReference>
<dbReference type="GO" id="GO:0140588">
    <property type="term" value="P:chromatin looping"/>
    <property type="evidence" value="ECO:0000303"/>
    <property type="project" value="ComplexPortal"/>
</dbReference>
<dbReference type="GO" id="GO:0006281">
    <property type="term" value="P:DNA repair"/>
    <property type="evidence" value="ECO:0000314"/>
    <property type="project" value="SGD"/>
</dbReference>
<dbReference type="GO" id="GO:0000724">
    <property type="term" value="P:double-strand break repair via homologous recombination"/>
    <property type="evidence" value="ECO:0000318"/>
    <property type="project" value="GO_Central"/>
</dbReference>
<dbReference type="GO" id="GO:0006301">
    <property type="term" value="P:postreplication repair"/>
    <property type="evidence" value="ECO:0000316"/>
    <property type="project" value="SGD"/>
</dbReference>
<dbReference type="GO" id="GO:0032204">
    <property type="term" value="P:regulation of telomere maintenance"/>
    <property type="evidence" value="ECO:0000303"/>
    <property type="project" value="ComplexPortal"/>
</dbReference>
<dbReference type="CDD" id="cd16493">
    <property type="entry name" value="RING-CH-C4HC3_NSE1"/>
    <property type="match status" value="1"/>
</dbReference>
<dbReference type="FunFam" id="1.10.10.10:FF:000852">
    <property type="entry name" value="Nse1p"/>
    <property type="match status" value="1"/>
</dbReference>
<dbReference type="Gene3D" id="1.10.10.10">
    <property type="entry name" value="Winged helix-like DNA-binding domain superfamily/Winged helix DNA-binding domain"/>
    <property type="match status" value="1"/>
</dbReference>
<dbReference type="InterPro" id="IPR011513">
    <property type="entry name" value="Nse1"/>
</dbReference>
<dbReference type="InterPro" id="IPR014857">
    <property type="entry name" value="Nse1_RING_C4HC3-type"/>
</dbReference>
<dbReference type="InterPro" id="IPR036388">
    <property type="entry name" value="WH-like_DNA-bd_sf"/>
</dbReference>
<dbReference type="PANTHER" id="PTHR20973">
    <property type="entry name" value="NON-SMC ELEMENT 1-RELATED"/>
    <property type="match status" value="1"/>
</dbReference>
<dbReference type="PANTHER" id="PTHR20973:SF0">
    <property type="entry name" value="NON-STRUCTURAL MAINTENANCE OF CHROMOSOMES ELEMENT 1 HOMOLOG"/>
    <property type="match status" value="1"/>
</dbReference>
<dbReference type="Pfam" id="PF07574">
    <property type="entry name" value="SMC_Nse1"/>
    <property type="match status" value="1"/>
</dbReference>
<dbReference type="Pfam" id="PF08746">
    <property type="entry name" value="zf-RING-like"/>
    <property type="match status" value="1"/>
</dbReference>
<name>NSE1_YEAST</name>
<keyword id="KW-0002">3D-structure</keyword>
<keyword id="KW-0227">DNA damage</keyword>
<keyword id="KW-0233">DNA recombination</keyword>
<keyword id="KW-0234">DNA repair</keyword>
<keyword id="KW-0479">Metal-binding</keyword>
<keyword id="KW-0539">Nucleus</keyword>
<keyword id="KW-1185">Reference proteome</keyword>
<keyword id="KW-0808">Transferase</keyword>
<keyword id="KW-0833">Ubl conjugation pathway</keyword>
<keyword id="KW-0862">Zinc</keyword>
<keyword id="KW-0863">Zinc-finger</keyword>
<proteinExistence type="evidence at protein level"/>
<sequence length="336" mass="38335">MEVHEEQVSAPVTGDATAKYLLQYILSARGICHENALILALMRLETDASTLNTEWSIQQWVDKLNDYINAINVKLNLLGYKIIRINHGIGRNAVTLKAKQNFESFEDNTAIRAHNNDYAVLQSIVLPESNRFFVYVNLASTEETKLATRFNQNEIEFMKWAIEQFMISGETIVEGPALETSIIVKEVNRILVAATGDSNLAKWRKFSTFTVGSTNLFQFQELTATDIEDLLLRLCELKWFYRTQEGKFGIDLRCIAELEEYLTSMYNLNTCQNCHKLAIQGVRCGNESCREENEETGENSLSQIWHVDCFKHYITHVSKNCDRCGSSLITEGVYVI</sequence>
<organism>
    <name type="scientific">Saccharomyces cerevisiae (strain ATCC 204508 / S288c)</name>
    <name type="common">Baker's yeast</name>
    <dbReference type="NCBI Taxonomy" id="559292"/>
    <lineage>
        <taxon>Eukaryota</taxon>
        <taxon>Fungi</taxon>
        <taxon>Dikarya</taxon>
        <taxon>Ascomycota</taxon>
        <taxon>Saccharomycotina</taxon>
        <taxon>Saccharomycetes</taxon>
        <taxon>Saccharomycetales</taxon>
        <taxon>Saccharomycetaceae</taxon>
        <taxon>Saccharomyces</taxon>
    </lineage>
</organism>
<protein>
    <recommendedName>
        <fullName>Non-structural maintenance of chromosomes element 1</fullName>
        <shortName>Non-SMC element 1</shortName>
        <ecNumber evidence="1">2.3.2.27</ecNumber>
    </recommendedName>
</protein>
<gene>
    <name type="primary">NSE1</name>
    <name type="ordered locus">YLR007W</name>
</gene>
<accession>Q07913</accession>
<accession>D6VY09</accession>
<comment type="function">
    <text evidence="3">Acts in a DNA repair pathway for removal of UV-induced DNA damage that is distinct from classical nucleotide excision repair and in repair of ionizing radiation damage. Functions in homologous recombination repair of DNA double strand breaks and in recovery of stalled replication forks.</text>
</comment>
<comment type="catalytic activity">
    <reaction evidence="1">
        <text>S-ubiquitinyl-[E2 ubiquitin-conjugating enzyme]-L-cysteine + [acceptor protein]-L-lysine = [E2 ubiquitin-conjugating enzyme]-L-cysteine + N(6)-ubiquitinyl-[acceptor protein]-L-lysine.</text>
        <dbReference type="EC" id="2.3.2.27"/>
    </reaction>
</comment>
<comment type="subunit">
    <text evidence="3 4 5">Component of the Smc5-Smc6 complex which consists of KRE29, MMS21, NSE1, NSE3, NSE4, NSE5, SMC5 and SMC6. Interacts with SMC5 and SMC6. Interacts with NSE3.</text>
</comment>
<comment type="interaction">
    <interactant intactId="EBI-30144">
        <id>Q07913</id>
    </interactant>
    <interactant intactId="EBI-36625">
        <id>Q05541</id>
        <label>NSE3</label>
    </interactant>
    <organismsDiffer>false</organismsDiffer>
    <experiments>3</experiments>
</comment>
<comment type="interaction">
    <interactant intactId="EBI-30144">
        <id>Q07913</id>
    </interactant>
    <interactant intactId="EBI-34125">
        <id>Q08204</id>
        <label>SMC5</label>
    </interactant>
    <organismsDiffer>false</organismsDiffer>
    <experiments>5</experiments>
</comment>
<comment type="interaction">
    <interactant intactId="EBI-30144">
        <id>Q07913</id>
    </interactant>
    <interactant intactId="EBI-15099">
        <id>Q12749</id>
        <label>SMC6</label>
    </interactant>
    <organismsDiffer>false</organismsDiffer>
    <experiments>5</experiments>
</comment>
<comment type="subcellular location">
    <subcellularLocation>
        <location evidence="3">Nucleus</location>
    </subcellularLocation>
</comment>
<comment type="similarity">
    <text evidence="6">Belongs to the NSE1 family.</text>
</comment>